<organism>
    <name type="scientific">Dehalococcoides mccartyi (strain ATCC BAA-2100 / JCM 16839 / KCTC 5957 / BAV1)</name>
    <dbReference type="NCBI Taxonomy" id="216389"/>
    <lineage>
        <taxon>Bacteria</taxon>
        <taxon>Bacillati</taxon>
        <taxon>Chloroflexota</taxon>
        <taxon>Dehalococcoidia</taxon>
        <taxon>Dehalococcoidales</taxon>
        <taxon>Dehalococcoidaceae</taxon>
        <taxon>Dehalococcoides</taxon>
    </lineage>
</organism>
<accession>A5FRY2</accession>
<evidence type="ECO:0000255" key="1">
    <source>
        <dbReference type="HAMAP-Rule" id="MF_01342"/>
    </source>
</evidence>
<evidence type="ECO:0000305" key="2"/>
<protein>
    <recommendedName>
        <fullName evidence="1">Large ribosomal subunit protein uL16</fullName>
    </recommendedName>
    <alternativeName>
        <fullName evidence="2">50S ribosomal protein L16</fullName>
    </alternativeName>
</protein>
<dbReference type="EMBL" id="CP000688">
    <property type="protein sequence ID" value="ABQ17043.1"/>
    <property type="molecule type" value="Genomic_DNA"/>
</dbReference>
<dbReference type="SMR" id="A5FRY2"/>
<dbReference type="KEGG" id="deb:DehaBAV1_0458"/>
<dbReference type="PATRIC" id="fig|216389.18.peg.501"/>
<dbReference type="HOGENOM" id="CLU_078858_2_1_0"/>
<dbReference type="GO" id="GO:0022625">
    <property type="term" value="C:cytosolic large ribosomal subunit"/>
    <property type="evidence" value="ECO:0007669"/>
    <property type="project" value="TreeGrafter"/>
</dbReference>
<dbReference type="GO" id="GO:0019843">
    <property type="term" value="F:rRNA binding"/>
    <property type="evidence" value="ECO:0007669"/>
    <property type="project" value="UniProtKB-UniRule"/>
</dbReference>
<dbReference type="GO" id="GO:0003735">
    <property type="term" value="F:structural constituent of ribosome"/>
    <property type="evidence" value="ECO:0007669"/>
    <property type="project" value="InterPro"/>
</dbReference>
<dbReference type="GO" id="GO:0000049">
    <property type="term" value="F:tRNA binding"/>
    <property type="evidence" value="ECO:0007669"/>
    <property type="project" value="UniProtKB-KW"/>
</dbReference>
<dbReference type="GO" id="GO:0006412">
    <property type="term" value="P:translation"/>
    <property type="evidence" value="ECO:0007669"/>
    <property type="project" value="UniProtKB-UniRule"/>
</dbReference>
<dbReference type="CDD" id="cd01433">
    <property type="entry name" value="Ribosomal_L16_L10e"/>
    <property type="match status" value="1"/>
</dbReference>
<dbReference type="FunFam" id="3.90.1170.10:FF:000001">
    <property type="entry name" value="50S ribosomal protein L16"/>
    <property type="match status" value="1"/>
</dbReference>
<dbReference type="Gene3D" id="3.90.1170.10">
    <property type="entry name" value="Ribosomal protein L10e/L16"/>
    <property type="match status" value="1"/>
</dbReference>
<dbReference type="HAMAP" id="MF_01342">
    <property type="entry name" value="Ribosomal_uL16"/>
    <property type="match status" value="1"/>
</dbReference>
<dbReference type="InterPro" id="IPR047873">
    <property type="entry name" value="Ribosomal_uL16"/>
</dbReference>
<dbReference type="InterPro" id="IPR000114">
    <property type="entry name" value="Ribosomal_uL16_bact-type"/>
</dbReference>
<dbReference type="InterPro" id="IPR020798">
    <property type="entry name" value="Ribosomal_uL16_CS"/>
</dbReference>
<dbReference type="InterPro" id="IPR016180">
    <property type="entry name" value="Ribosomal_uL16_dom"/>
</dbReference>
<dbReference type="InterPro" id="IPR036920">
    <property type="entry name" value="Ribosomal_uL16_sf"/>
</dbReference>
<dbReference type="NCBIfam" id="TIGR01164">
    <property type="entry name" value="rplP_bact"/>
    <property type="match status" value="1"/>
</dbReference>
<dbReference type="PANTHER" id="PTHR12220">
    <property type="entry name" value="50S/60S RIBOSOMAL PROTEIN L16"/>
    <property type="match status" value="1"/>
</dbReference>
<dbReference type="PANTHER" id="PTHR12220:SF13">
    <property type="entry name" value="LARGE RIBOSOMAL SUBUNIT PROTEIN UL16M"/>
    <property type="match status" value="1"/>
</dbReference>
<dbReference type="Pfam" id="PF00252">
    <property type="entry name" value="Ribosomal_L16"/>
    <property type="match status" value="1"/>
</dbReference>
<dbReference type="PRINTS" id="PR00060">
    <property type="entry name" value="RIBOSOMALL16"/>
</dbReference>
<dbReference type="SUPFAM" id="SSF54686">
    <property type="entry name" value="Ribosomal protein L16p/L10e"/>
    <property type="match status" value="1"/>
</dbReference>
<dbReference type="PROSITE" id="PS00586">
    <property type="entry name" value="RIBOSOMAL_L16_1"/>
    <property type="match status" value="1"/>
</dbReference>
<feature type="chain" id="PRO_1000086753" description="Large ribosomal subunit protein uL16">
    <location>
        <begin position="1"/>
        <end position="149"/>
    </location>
</feature>
<comment type="function">
    <text evidence="1">Binds 23S rRNA and is also seen to make contacts with the A and possibly P site tRNAs.</text>
</comment>
<comment type="subunit">
    <text evidence="1">Part of the 50S ribosomal subunit.</text>
</comment>
<comment type="similarity">
    <text evidence="1">Belongs to the universal ribosomal protein uL16 family.</text>
</comment>
<name>RL16_DEHMB</name>
<sequence>MLQPKRVKFRKVQRGRRDGAAHKGNTVAFGEFALQSLEAGWITARQIEATRRAITRYIRRGGQVWIRIFPDKPITKKPAETRQGGGKGAPEEWVAVVRRGRIMFEIGGVTPEAAKEAMRLASYKMPVKTRFVARDIPVVAGETEVEEAE</sequence>
<gene>
    <name evidence="1" type="primary">rplP</name>
    <name type="ordered locus">DehaBAV1_0458</name>
</gene>
<proteinExistence type="inferred from homology"/>
<reference key="1">
    <citation type="submission" date="2007-05" db="EMBL/GenBank/DDBJ databases">
        <title>Complete sequence of Dehalococcoides sp. BAV1.</title>
        <authorList>
            <consortium name="US DOE Joint Genome Institute"/>
            <person name="Copeland A."/>
            <person name="Lucas S."/>
            <person name="Lapidus A."/>
            <person name="Barry K."/>
            <person name="Detter J.C."/>
            <person name="Glavina del Rio T."/>
            <person name="Hammon N."/>
            <person name="Israni S."/>
            <person name="Pitluck S."/>
            <person name="Lowry S."/>
            <person name="Clum A."/>
            <person name="Schmutz J."/>
            <person name="Larimer F."/>
            <person name="Land M."/>
            <person name="Hauser L."/>
            <person name="Kyrpides N."/>
            <person name="Kim E."/>
            <person name="Ritalahti K.M."/>
            <person name="Loeffler F."/>
            <person name="Richardson P."/>
        </authorList>
    </citation>
    <scope>NUCLEOTIDE SEQUENCE [LARGE SCALE GENOMIC DNA]</scope>
    <source>
        <strain>ATCC BAA-2100 / JCM 16839 / KCTC 5957 / BAV1</strain>
    </source>
</reference>
<keyword id="KW-0687">Ribonucleoprotein</keyword>
<keyword id="KW-0689">Ribosomal protein</keyword>
<keyword id="KW-0694">RNA-binding</keyword>
<keyword id="KW-0699">rRNA-binding</keyword>
<keyword id="KW-0820">tRNA-binding</keyword>